<organism>
    <name type="scientific">Caenorhabditis elegans</name>
    <dbReference type="NCBI Taxonomy" id="6239"/>
    <lineage>
        <taxon>Eukaryota</taxon>
        <taxon>Metazoa</taxon>
        <taxon>Ecdysozoa</taxon>
        <taxon>Nematoda</taxon>
        <taxon>Chromadorea</taxon>
        <taxon>Rhabditida</taxon>
        <taxon>Rhabditina</taxon>
        <taxon>Rhabditomorpha</taxon>
        <taxon>Rhabditoidea</taxon>
        <taxon>Rhabditidae</taxon>
        <taxon>Peloderinae</taxon>
        <taxon>Caenorhabditis</taxon>
    </lineage>
</organism>
<protein>
    <recommendedName>
        <fullName>Sodium-dependent high-affinity dicarboxylate transporter 2</fullName>
    </recommendedName>
    <alternativeName>
        <fullName>Na(+)/dicarboxylate cotransporter 2</fullName>
        <shortName>NaDC-2</shortName>
        <shortName>ceNaDC2</shortName>
    </alternativeName>
</protein>
<gene>
    <name type="primary">nac-2</name>
    <name type="synonym">indy-3</name>
    <name type="synonym">nat-1</name>
    <name type="ORF">R107.1</name>
</gene>
<keyword id="KW-0406">Ion transport</keyword>
<keyword id="KW-0472">Membrane</keyword>
<keyword id="KW-1185">Reference proteome</keyword>
<keyword id="KW-0915">Sodium</keyword>
<keyword id="KW-0739">Sodium transport</keyword>
<keyword id="KW-0769">Symport</keyword>
<keyword id="KW-0812">Transmembrane</keyword>
<keyword id="KW-1133">Transmembrane helix</keyword>
<keyword id="KW-0813">Transport</keyword>
<comment type="function">
    <text evidence="1">High-affinity sodium-dicarboxylate cotransporter that accepts a range of tricarboxylic acid-cycle intermediates with 4-5 carbon atoms. There is no interaction with monocarboxylates (By similarity).</text>
</comment>
<comment type="subcellular location">
    <subcellularLocation>
        <location evidence="3">Membrane</location>
        <topology evidence="3">Multi-pass membrane protein</topology>
    </subcellularLocation>
</comment>
<comment type="similarity">
    <text evidence="3">Belongs to the SLC13A/DASS transporter (TC 2.A.47) family. NADC subfamily.</text>
</comment>
<reference key="1">
    <citation type="submission" date="2002-03" db="EMBL/GenBank/DDBJ databases">
        <title>A second high-affinity dicarboxylate transporter from C. elegans.</title>
        <authorList>
            <person name="Fei Y.-J."/>
            <person name="Inoue K."/>
            <person name="Ganapathy V."/>
        </authorList>
    </citation>
    <scope>NUCLEOTIDE SEQUENCE [MRNA]</scope>
</reference>
<reference key="2">
    <citation type="journal article" date="1994" name="Nature">
        <title>2.2 Mb of contiguous nucleotide sequence from chromosome III of C. elegans.</title>
        <authorList>
            <person name="Wilson R."/>
            <person name="Ainscough R."/>
            <person name="Anderson K."/>
            <person name="Baynes C."/>
            <person name="Berks M."/>
            <person name="Bonfield J."/>
            <person name="Burton J."/>
            <person name="Connell M."/>
            <person name="Copsey T."/>
            <person name="Cooper J."/>
            <person name="Coulson A."/>
            <person name="Craxton M."/>
            <person name="Dear S."/>
            <person name="Du Z."/>
            <person name="Durbin R."/>
            <person name="Favello A."/>
            <person name="Fraser A."/>
            <person name="Fulton L."/>
            <person name="Gardner A."/>
            <person name="Green P."/>
            <person name="Hawkins T."/>
            <person name="Hillier L."/>
            <person name="Jier M."/>
            <person name="Johnston L."/>
            <person name="Jones M."/>
            <person name="Kershaw J."/>
            <person name="Kirsten J."/>
            <person name="Laisster N."/>
            <person name="Latreille P."/>
            <person name="Lightning J."/>
            <person name="Lloyd C."/>
            <person name="Mortimore B."/>
            <person name="O'Callaghan M."/>
            <person name="Parsons J."/>
            <person name="Percy C."/>
            <person name="Rifken L."/>
            <person name="Roopra A."/>
            <person name="Saunders D."/>
            <person name="Shownkeen R."/>
            <person name="Sims M."/>
            <person name="Smaldon N."/>
            <person name="Smith A."/>
            <person name="Smith M."/>
            <person name="Sonnhammer E."/>
            <person name="Staden R."/>
            <person name="Sulston J."/>
            <person name="Thierry-Mieg J."/>
            <person name="Thomas K."/>
            <person name="Vaudin M."/>
            <person name="Vaughan K."/>
            <person name="Waterston R."/>
            <person name="Watson A."/>
            <person name="Weinstock L."/>
            <person name="Wilkinson-Sproat J."/>
            <person name="Wohldman P."/>
        </authorList>
    </citation>
    <scope>NUCLEOTIDE SEQUENCE [LARGE SCALE GENOMIC DNA]</scope>
    <source>
        <strain>Bristol N2</strain>
    </source>
</reference>
<reference key="3">
    <citation type="journal article" date="1998" name="Science">
        <title>Genome sequence of the nematode C. elegans: a platform for investigating biology.</title>
        <authorList>
            <consortium name="The C. elegans sequencing consortium"/>
        </authorList>
    </citation>
    <scope>NUCLEOTIDE SEQUENCE [LARGE SCALE GENOMIC DNA]</scope>
    <source>
        <strain>Bristol N2</strain>
    </source>
</reference>
<accession>P32739</accession>
<accession>Q86MC8</accession>
<name>NAD2_CAEEL</name>
<dbReference type="EMBL" id="AY090486">
    <property type="protein sequence ID" value="AAM11895.1"/>
    <property type="molecule type" value="mRNA"/>
</dbReference>
<dbReference type="EMBL" id="Z14092">
    <property type="protein sequence ID" value="CAA78468.2"/>
    <property type="molecule type" value="Genomic_DNA"/>
</dbReference>
<dbReference type="PIR" id="A88546">
    <property type="entry name" value="A88546"/>
</dbReference>
<dbReference type="PIR" id="S30871">
    <property type="entry name" value="S30871"/>
</dbReference>
<dbReference type="RefSeq" id="NP_001254977.1">
    <property type="nucleotide sequence ID" value="NM_001268048.2"/>
</dbReference>
<dbReference type="SMR" id="P32739"/>
<dbReference type="FunCoup" id="P32739">
    <property type="interactions" value="73"/>
</dbReference>
<dbReference type="STRING" id="6239.R107.1b.1"/>
<dbReference type="PaxDb" id="6239-R107.1b"/>
<dbReference type="EnsemblMetazoa" id="R107.1a.1">
    <property type="protein sequence ID" value="R107.1a.1"/>
    <property type="gene ID" value="WBGene00003518"/>
</dbReference>
<dbReference type="GeneID" id="187898"/>
<dbReference type="KEGG" id="cel:CELE_R107.1"/>
<dbReference type="UCSC" id="R107.1.1">
    <property type="organism name" value="c. elegans"/>
</dbReference>
<dbReference type="AGR" id="WB:WBGene00003518"/>
<dbReference type="CTD" id="187898"/>
<dbReference type="WormBase" id="R107.1a">
    <property type="protein sequence ID" value="CE33536"/>
    <property type="gene ID" value="WBGene00003518"/>
    <property type="gene designation" value="nac-2"/>
</dbReference>
<dbReference type="eggNOG" id="KOG1281">
    <property type="taxonomic scope" value="Eukaryota"/>
</dbReference>
<dbReference type="GeneTree" id="ENSGT01030000234550"/>
<dbReference type="HOGENOM" id="CLU_005170_9_2_1"/>
<dbReference type="InParanoid" id="P32739"/>
<dbReference type="OrthoDB" id="6493944at2759"/>
<dbReference type="PhylomeDB" id="P32739"/>
<dbReference type="Reactome" id="R-CEL-433137">
    <property type="pathway name" value="Sodium-coupled sulphate, di- and tri-carboxylate transporters"/>
</dbReference>
<dbReference type="PRO" id="PR:P32739"/>
<dbReference type="Proteomes" id="UP000001940">
    <property type="component" value="Chromosome III"/>
</dbReference>
<dbReference type="Bgee" id="WBGene00003518">
    <property type="expression patterns" value="Expressed in embryo and 3 other cell types or tissues"/>
</dbReference>
<dbReference type="ExpressionAtlas" id="P32739">
    <property type="expression patterns" value="baseline and differential"/>
</dbReference>
<dbReference type="GO" id="GO:0005886">
    <property type="term" value="C:plasma membrane"/>
    <property type="evidence" value="ECO:0000318"/>
    <property type="project" value="GO_Central"/>
</dbReference>
<dbReference type="GO" id="GO:0015137">
    <property type="term" value="F:citrate transmembrane transporter activity"/>
    <property type="evidence" value="ECO:0000314"/>
    <property type="project" value="WormBase"/>
</dbReference>
<dbReference type="GO" id="GO:0015141">
    <property type="term" value="F:succinate transmembrane transporter activity"/>
    <property type="evidence" value="ECO:0000314"/>
    <property type="project" value="WormBase"/>
</dbReference>
<dbReference type="GO" id="GO:0015293">
    <property type="term" value="F:symporter activity"/>
    <property type="evidence" value="ECO:0007669"/>
    <property type="project" value="UniProtKB-KW"/>
</dbReference>
<dbReference type="GO" id="GO:0015746">
    <property type="term" value="P:citrate transport"/>
    <property type="evidence" value="ECO:0000314"/>
    <property type="project" value="WormBase"/>
</dbReference>
<dbReference type="GO" id="GO:0008340">
    <property type="term" value="P:determination of adult lifespan"/>
    <property type="evidence" value="ECO:0000315"/>
    <property type="project" value="WormBase"/>
</dbReference>
<dbReference type="GO" id="GO:0006629">
    <property type="term" value="P:lipid metabolic process"/>
    <property type="evidence" value="ECO:0000315"/>
    <property type="project" value="WormBase"/>
</dbReference>
<dbReference type="GO" id="GO:0040018">
    <property type="term" value="P:positive regulation of multicellular organism growth"/>
    <property type="evidence" value="ECO:0000315"/>
    <property type="project" value="WormBase"/>
</dbReference>
<dbReference type="GO" id="GO:0006814">
    <property type="term" value="P:sodium ion transport"/>
    <property type="evidence" value="ECO:0007669"/>
    <property type="project" value="UniProtKB-KW"/>
</dbReference>
<dbReference type="GO" id="GO:0015744">
    <property type="term" value="P:succinate transport"/>
    <property type="evidence" value="ECO:0000314"/>
    <property type="project" value="WormBase"/>
</dbReference>
<dbReference type="GO" id="GO:0055085">
    <property type="term" value="P:transmembrane transport"/>
    <property type="evidence" value="ECO:0000318"/>
    <property type="project" value="GO_Central"/>
</dbReference>
<dbReference type="InterPro" id="IPR031312">
    <property type="entry name" value="Na/sul_symport_CS"/>
</dbReference>
<dbReference type="InterPro" id="IPR001898">
    <property type="entry name" value="SLC13A/DASS"/>
</dbReference>
<dbReference type="PANTHER" id="PTHR10283:SF84">
    <property type="entry name" value="SODIUM-DEPENDENT HIGH-AFFINITY DICARBOXYLATE TRANSPORTER 2"/>
    <property type="match status" value="1"/>
</dbReference>
<dbReference type="PANTHER" id="PTHR10283">
    <property type="entry name" value="SOLUTE CARRIER FAMILY 13 MEMBER"/>
    <property type="match status" value="1"/>
</dbReference>
<dbReference type="Pfam" id="PF00939">
    <property type="entry name" value="Na_sulph_symp"/>
    <property type="match status" value="1"/>
</dbReference>
<dbReference type="PROSITE" id="PS01271">
    <property type="entry name" value="NA_SULFATE"/>
    <property type="match status" value="1"/>
</dbReference>
<evidence type="ECO:0000250" key="1"/>
<evidence type="ECO:0000255" key="2"/>
<evidence type="ECO:0000305" key="3"/>
<sequence>MKPSPQRTLIKKLLVLLGPLVAVPLLFFGPEYRCLFSIIFLSTYWIGEAFPIGVTSLFPLALYPILQIVPSKQISPVYFKDSIVLFMCTLIMAMAVEATGLHRRIALKLLTKVGAKQPVMLLGFMCITSFISFFVSDTACTALMCPTAVALLMSMSDAVQHLKEDHRKPKPPPDDATVAEKLRIDDMTPQDAGFCKALILACAHASLIGGTAIITSTGPNLVFRENIHKRYPEGQVTMTYLQWMVFAIPPMFVYLLASYIILVCYFMGPSTFARWFERPSKEEAHLKKLIEKNIQTMYEDLGDVSWGEKSVFVFFILLIGSWISRDPGFTPGWGDLLPHRNFISDSVSGVLISCILFVWPKDPFDPIDPMAPILKWTDMKSKFSWSCTLLIGAGYAISEGVDKSGLSRLISCGMKNIFVGMSSLPLQLTVTTIIVIMTEFASNVSTGSIFIPISLGVAESMGVHPLYLALPTTVACSFAFMLPISTPPNAVVYDTKVISMVEMIVCGFLLNIACILITSLNMNTWTYFIFSLNIFPENIVISSENSSYPVC</sequence>
<feature type="chain" id="PRO_0000172497" description="Sodium-dependent high-affinity dicarboxylate transporter 2">
    <location>
        <begin position="1"/>
        <end position="551"/>
    </location>
</feature>
<feature type="transmembrane region" description="Helical" evidence="2">
    <location>
        <begin position="9"/>
        <end position="29"/>
    </location>
</feature>
<feature type="transmembrane region" description="Helical" evidence="2">
    <location>
        <begin position="34"/>
        <end position="54"/>
    </location>
</feature>
<feature type="transmembrane region" description="Helical" evidence="2">
    <location>
        <begin position="82"/>
        <end position="102"/>
    </location>
</feature>
<feature type="transmembrane region" description="Helical" evidence="2">
    <location>
        <begin position="119"/>
        <end position="139"/>
    </location>
</feature>
<feature type="transmembrane region" description="Helical" evidence="2">
    <location>
        <begin position="194"/>
        <end position="214"/>
    </location>
</feature>
<feature type="transmembrane region" description="Helical" evidence="2">
    <location>
        <begin position="243"/>
        <end position="263"/>
    </location>
</feature>
<feature type="transmembrane region" description="Helical" evidence="2">
    <location>
        <begin position="347"/>
        <end position="367"/>
    </location>
</feature>
<feature type="transmembrane region" description="Helical" evidence="2">
    <location>
        <begin position="417"/>
        <end position="437"/>
    </location>
</feature>
<feature type="transmembrane region" description="Helical" evidence="2">
    <location>
        <begin position="449"/>
        <end position="469"/>
    </location>
</feature>
<feature type="transmembrane region" description="Helical" evidence="2">
    <location>
        <begin position="497"/>
        <end position="517"/>
    </location>
</feature>
<feature type="sequence conflict" description="In Ref. 1; AAM11895." evidence="3" ref="1">
    <original>I</original>
    <variation>S</variation>
    <location>
        <position position="91"/>
    </location>
</feature>
<feature type="sequence conflict" description="In Ref. 1; AAM11895." evidence="3" ref="1">
    <original>L</original>
    <variation>M</variation>
    <location>
        <position position="182"/>
    </location>
</feature>
<proteinExistence type="evidence at transcript level"/>